<feature type="chain" id="PRO_0000405877" description="Phosphatidylethanolamine N-methyltransferase">
    <location>
        <begin position="1"/>
        <end position="1077"/>
    </location>
</feature>
<feature type="topological domain" description="Lumenal" evidence="1">
    <location>
        <begin position="1"/>
        <end position="85"/>
    </location>
</feature>
<feature type="transmembrane region" description="Helical" evidence="1">
    <location>
        <begin position="86"/>
        <end position="106"/>
    </location>
</feature>
<feature type="topological domain" description="Cytoplasmic" evidence="1">
    <location>
        <begin position="107"/>
        <end position="109"/>
    </location>
</feature>
<feature type="transmembrane region" description="Helical" evidence="1">
    <location>
        <begin position="110"/>
        <end position="130"/>
    </location>
</feature>
<feature type="topological domain" description="Lumenal" evidence="1">
    <location>
        <begin position="131"/>
        <end position="195"/>
    </location>
</feature>
<feature type="transmembrane region" description="Helical" evidence="1">
    <location>
        <begin position="196"/>
        <end position="216"/>
    </location>
</feature>
<feature type="topological domain" description="Cytoplasmic" evidence="1">
    <location>
        <begin position="217"/>
        <end position="223"/>
    </location>
</feature>
<feature type="transmembrane region" description="Helical" evidence="1">
    <location>
        <begin position="224"/>
        <end position="244"/>
    </location>
</feature>
<feature type="topological domain" description="Lumenal" evidence="1">
    <location>
        <begin position="245"/>
        <end position="277"/>
    </location>
</feature>
<feature type="transmembrane region" description="Helical" evidence="1">
    <location>
        <begin position="278"/>
        <end position="298"/>
    </location>
</feature>
<feature type="topological domain" description="Cytoplasmic" evidence="1">
    <location>
        <begin position="299"/>
        <end position="300"/>
    </location>
</feature>
<feature type="transmembrane region" description="Helical" evidence="1">
    <location>
        <begin position="301"/>
        <end position="321"/>
    </location>
</feature>
<feature type="topological domain" description="Lumenal" evidence="1">
    <location>
        <begin position="322"/>
        <end position="392"/>
    </location>
</feature>
<feature type="transmembrane region" description="Helical" evidence="1">
    <location>
        <begin position="393"/>
        <end position="413"/>
    </location>
</feature>
<feature type="topological domain" description="Cytoplasmic" evidence="1">
    <location>
        <begin position="414"/>
        <end position="419"/>
    </location>
</feature>
<feature type="transmembrane region" description="Helical" evidence="1">
    <location>
        <begin position="420"/>
        <end position="440"/>
    </location>
</feature>
<feature type="topological domain" description="Lumenal" evidence="1">
    <location>
        <begin position="441"/>
        <end position="482"/>
    </location>
</feature>
<feature type="transmembrane region" description="Helical" evidence="1">
    <location>
        <begin position="483"/>
        <end position="503"/>
    </location>
</feature>
<feature type="topological domain" description="Cytoplasmic" evidence="1">
    <location>
        <begin position="504"/>
        <end position="506"/>
    </location>
</feature>
<feature type="transmembrane region" description="Helical" evidence="1">
    <location>
        <begin position="507"/>
        <end position="527"/>
    </location>
</feature>
<feature type="topological domain" description="Lumenal" evidence="1">
    <location>
        <begin position="528"/>
        <end position="575"/>
    </location>
</feature>
<feature type="transmembrane region" description="Helical" evidence="1">
    <location>
        <begin position="576"/>
        <end position="596"/>
    </location>
</feature>
<feature type="topological domain" description="Cytoplasmic" evidence="1">
    <location>
        <begin position="597"/>
        <end position="1077"/>
    </location>
</feature>
<feature type="region of interest" description="Disordered" evidence="2">
    <location>
        <begin position="330"/>
        <end position="378"/>
    </location>
</feature>
<feature type="region of interest" description="Disordered" evidence="2">
    <location>
        <begin position="1027"/>
        <end position="1077"/>
    </location>
</feature>
<feature type="compositionally biased region" description="Polar residues" evidence="2">
    <location>
        <begin position="342"/>
        <end position="361"/>
    </location>
</feature>
<protein>
    <recommendedName>
        <fullName evidence="1">Phosphatidylethanolamine N-methyltransferase</fullName>
        <shortName evidence="1">PE methyltransferase</shortName>
        <shortName evidence="1">PEAMT</shortName>
        <shortName evidence="1">PEMT</shortName>
        <ecNumber evidence="1">2.1.1.17</ecNumber>
    </recommendedName>
</protein>
<keyword id="KW-0256">Endoplasmic reticulum</keyword>
<keyword id="KW-0444">Lipid biosynthesis</keyword>
<keyword id="KW-0443">Lipid metabolism</keyword>
<keyword id="KW-0472">Membrane</keyword>
<keyword id="KW-0489">Methyltransferase</keyword>
<keyword id="KW-0594">Phospholipid biosynthesis</keyword>
<keyword id="KW-1208">Phospholipid metabolism</keyword>
<keyword id="KW-1185">Reference proteome</keyword>
<keyword id="KW-0949">S-adenosyl-L-methionine</keyword>
<keyword id="KW-0808">Transferase</keyword>
<keyword id="KW-0812">Transmembrane</keyword>
<keyword id="KW-1133">Transmembrane helix</keyword>
<comment type="function">
    <text evidence="1">Catalyzes the first step of the methylation pathway of phosphatidylcholine biosynthesis, the SAM-dependent methylation of phosphatidylethanolamine (PE) to phosphatidylmonomethylethanolamine (PMME).</text>
</comment>
<comment type="catalytic activity">
    <reaction evidence="1">
        <text>a 1,2-diacyl-sn-glycero-3-phosphoethanolamine + S-adenosyl-L-methionine = a 1,2-diacyl-sn-glycero-3-phospho-N-methylethanolamine + S-adenosyl-L-homocysteine + H(+)</text>
        <dbReference type="Rhea" id="RHEA:11164"/>
        <dbReference type="ChEBI" id="CHEBI:15378"/>
        <dbReference type="ChEBI" id="CHEBI:57856"/>
        <dbReference type="ChEBI" id="CHEBI:59789"/>
        <dbReference type="ChEBI" id="CHEBI:64573"/>
        <dbReference type="ChEBI" id="CHEBI:64612"/>
        <dbReference type="EC" id="2.1.1.17"/>
    </reaction>
</comment>
<comment type="pathway">
    <text evidence="1">Phospholipid metabolism; phosphatidylcholine biosynthesis.</text>
</comment>
<comment type="subcellular location">
    <subcellularLocation>
        <location evidence="1">Endoplasmic reticulum membrane</location>
        <topology evidence="1">Multi-pass membrane protein</topology>
    </subcellularLocation>
</comment>
<comment type="similarity">
    <text evidence="1">Belongs to the class VI-like SAM-binding methyltransferase superfamily. CHO2 family.</text>
</comment>
<accession>A2R616</accession>
<dbReference type="EC" id="2.1.1.17" evidence="1"/>
<dbReference type="EMBL" id="AM270348">
    <property type="protein sequence ID" value="CAK42583.1"/>
    <property type="molecule type" value="Genomic_DNA"/>
</dbReference>
<dbReference type="SMR" id="A2R616"/>
<dbReference type="EnsemblFungi" id="CAK42583">
    <property type="protein sequence ID" value="CAK42583"/>
    <property type="gene ID" value="An15g06310"/>
</dbReference>
<dbReference type="HOGENOM" id="CLU_005987_0_0_1"/>
<dbReference type="UniPathway" id="UPA00753"/>
<dbReference type="Proteomes" id="UP000006706">
    <property type="component" value="Chromosome 3R"/>
</dbReference>
<dbReference type="GO" id="GO:0032541">
    <property type="term" value="C:cortical endoplasmic reticulum"/>
    <property type="evidence" value="ECO:0007669"/>
    <property type="project" value="EnsemblFungi"/>
</dbReference>
<dbReference type="GO" id="GO:0005789">
    <property type="term" value="C:endoplasmic reticulum membrane"/>
    <property type="evidence" value="ECO:0007669"/>
    <property type="project" value="UniProtKB-SubCell"/>
</dbReference>
<dbReference type="GO" id="GO:0097038">
    <property type="term" value="C:perinuclear endoplasmic reticulum"/>
    <property type="evidence" value="ECO:0007669"/>
    <property type="project" value="EnsemblFungi"/>
</dbReference>
<dbReference type="GO" id="GO:0004608">
    <property type="term" value="F:phosphatidylethanolamine N-methyltransferase activity"/>
    <property type="evidence" value="ECO:0007669"/>
    <property type="project" value="UniProtKB-UniRule"/>
</dbReference>
<dbReference type="GO" id="GO:0032259">
    <property type="term" value="P:methylation"/>
    <property type="evidence" value="ECO:0007669"/>
    <property type="project" value="UniProtKB-KW"/>
</dbReference>
<dbReference type="GO" id="GO:0006656">
    <property type="term" value="P:phosphatidylcholine biosynthetic process"/>
    <property type="evidence" value="ECO:0007669"/>
    <property type="project" value="UniProtKB-UniRule"/>
</dbReference>
<dbReference type="FunFam" id="2.60.40.2840:FF:000006">
    <property type="entry name" value="Phosphatidylethanolamine N-methyltransferase"/>
    <property type="match status" value="1"/>
</dbReference>
<dbReference type="Gene3D" id="2.60.40.2840">
    <property type="match status" value="1"/>
</dbReference>
<dbReference type="HAMAP" id="MF_03217">
    <property type="entry name" value="PEMT"/>
    <property type="match status" value="1"/>
</dbReference>
<dbReference type="InterPro" id="IPR007318">
    <property type="entry name" value="Phopholipid_MeTrfase"/>
</dbReference>
<dbReference type="InterPro" id="IPR016219">
    <property type="entry name" value="Phosphatid-EA_MeTrfase_fun"/>
</dbReference>
<dbReference type="PANTHER" id="PTHR32138">
    <property type="entry name" value="PHOSPHATIDYLETHANOLAMINE N-METHYLTRANSFERASE"/>
    <property type="match status" value="1"/>
</dbReference>
<dbReference type="PANTHER" id="PTHR32138:SF0">
    <property type="entry name" value="PHOSPHATIDYLETHANOLAMINE N-METHYLTRANSFERASE"/>
    <property type="match status" value="1"/>
</dbReference>
<dbReference type="Pfam" id="PF04191">
    <property type="entry name" value="PEMT"/>
    <property type="match status" value="2"/>
</dbReference>
<dbReference type="PIRSF" id="PIRSF000383">
    <property type="entry name" value="PEAMT"/>
    <property type="match status" value="1"/>
</dbReference>
<dbReference type="PROSITE" id="PS51598">
    <property type="entry name" value="SAM_CHO2"/>
    <property type="match status" value="1"/>
</dbReference>
<organism>
    <name type="scientific">Aspergillus niger (strain ATCC MYA-4892 / CBS 513.88 / FGSC A1513)</name>
    <dbReference type="NCBI Taxonomy" id="425011"/>
    <lineage>
        <taxon>Eukaryota</taxon>
        <taxon>Fungi</taxon>
        <taxon>Dikarya</taxon>
        <taxon>Ascomycota</taxon>
        <taxon>Pezizomycotina</taxon>
        <taxon>Eurotiomycetes</taxon>
        <taxon>Eurotiomycetidae</taxon>
        <taxon>Eurotiales</taxon>
        <taxon>Aspergillaceae</taxon>
        <taxon>Aspergillus</taxon>
        <taxon>Aspergillus subgen. Circumdati</taxon>
    </lineage>
</organism>
<reference key="1">
    <citation type="journal article" date="2007" name="Nat. Biotechnol.">
        <title>Genome sequencing and analysis of the versatile cell factory Aspergillus niger CBS 513.88.</title>
        <authorList>
            <person name="Pel H.J."/>
            <person name="de Winde J.H."/>
            <person name="Archer D.B."/>
            <person name="Dyer P.S."/>
            <person name="Hofmann G."/>
            <person name="Schaap P.J."/>
            <person name="Turner G."/>
            <person name="de Vries R.P."/>
            <person name="Albang R."/>
            <person name="Albermann K."/>
            <person name="Andersen M.R."/>
            <person name="Bendtsen J.D."/>
            <person name="Benen J.A.E."/>
            <person name="van den Berg M."/>
            <person name="Breestraat S."/>
            <person name="Caddick M.X."/>
            <person name="Contreras R."/>
            <person name="Cornell M."/>
            <person name="Coutinho P.M."/>
            <person name="Danchin E.G.J."/>
            <person name="Debets A.J.M."/>
            <person name="Dekker P."/>
            <person name="van Dijck P.W.M."/>
            <person name="van Dijk A."/>
            <person name="Dijkhuizen L."/>
            <person name="Driessen A.J.M."/>
            <person name="d'Enfert C."/>
            <person name="Geysens S."/>
            <person name="Goosen C."/>
            <person name="Groot G.S.P."/>
            <person name="de Groot P.W.J."/>
            <person name="Guillemette T."/>
            <person name="Henrissat B."/>
            <person name="Herweijer M."/>
            <person name="van den Hombergh J.P.T.W."/>
            <person name="van den Hondel C.A.M.J.J."/>
            <person name="van der Heijden R.T.J.M."/>
            <person name="van der Kaaij R.M."/>
            <person name="Klis F.M."/>
            <person name="Kools H.J."/>
            <person name="Kubicek C.P."/>
            <person name="van Kuyk P.A."/>
            <person name="Lauber J."/>
            <person name="Lu X."/>
            <person name="van der Maarel M.J.E.C."/>
            <person name="Meulenberg R."/>
            <person name="Menke H."/>
            <person name="Mortimer M.A."/>
            <person name="Nielsen J."/>
            <person name="Oliver S.G."/>
            <person name="Olsthoorn M."/>
            <person name="Pal K."/>
            <person name="van Peij N.N.M.E."/>
            <person name="Ram A.F.J."/>
            <person name="Rinas U."/>
            <person name="Roubos J.A."/>
            <person name="Sagt C.M.J."/>
            <person name="Schmoll M."/>
            <person name="Sun J."/>
            <person name="Ussery D."/>
            <person name="Varga J."/>
            <person name="Vervecken W."/>
            <person name="van de Vondervoort P.J.J."/>
            <person name="Wedler H."/>
            <person name="Woesten H.A.B."/>
            <person name="Zeng A.-P."/>
            <person name="van Ooyen A.J.J."/>
            <person name="Visser J."/>
            <person name="Stam H."/>
        </authorList>
    </citation>
    <scope>NUCLEOTIDE SEQUENCE [LARGE SCALE GENOMIC DNA]</scope>
    <source>
        <strain>ATCC MYA-4892 / CBS 513.88 / FGSC A1513</strain>
    </source>
</reference>
<evidence type="ECO:0000255" key="1">
    <source>
        <dbReference type="HAMAP-Rule" id="MF_03217"/>
    </source>
</evidence>
<evidence type="ECO:0000256" key="2">
    <source>
        <dbReference type="SAM" id="MobiDB-lite"/>
    </source>
</evidence>
<proteinExistence type="inferred from homology"/>
<sequence>MDRGLSTGTHIGDDGLRERFQASQSDSSLGAGALTAAGEVEAKDGTSQNKKTFGRTPDGTVFTVPQTHDMVSQLLSPSEPKNLSDVIVLAILGAHILLLWWLPDFAKIPVFAVIYLFWRAAYNAGIGWLLHNQSHHKTLVRWAEKTRIFVNPSTNQNPHPKLYNLLKRELETKIPTDYSFEEAPIEYNTWLVFRRLVDLILMCDFTSYCLFAIACSHHPVGESMLMTVSRWSAGIVLVLFNLWVKLDAHRVVKDYAWYWGDFFYLIDQELTFDGVFEMAPHPMYSVGYAGYYGISLMAASYKVLFISIIAHAAQFAFLVFVENPHIDKTYNPPPPRKRMTEQDSVSTSSQATEPSVASASTDEPLPQATTPPSGPPPSVHNLLGFNNLDLYRITDTSSILIQLLVFALTVLTPSTPRYQFLFVANAAVWRLVFSVGIGYLLTEQSDCKAWTRHFLKYGETPNEAWNQWKGTYHLSMIMCYASFIAAVWKMYTLPADWGYGLVLLRHVLGAGLISLQIWTSASIYESLGEFGWFYGDFFFEGAHKLTYNGIYRFLNNPERVLGLAGVWGAVLITSSGAITFLALLSHILSLAFIQFVERPHMQKLYGRSLRQDAGLVKSLKRTLPPTLRQLHGSVDKIFDDSFEFIEELIDTARPKLAAGVNTFVKDTTALFQKYPARVTITRIDEDLAGLDSRDYALEIEGTDSSSLEERGDLKNLVFEYGSPIKVKWTAPLNHSKKDWVSLYRVTDNTSREVSRVSSQGRWVATNEGFYDNLTCEKGIITSDIVTENSEHRDVATGEVIFSGDKLFWTQGVFEFRYHHNGKHNVMAISRPFEIRIRRFDEESFEDNQASVEKSLLPVVRNCFDRDPEIAPETVEEQFGSLVERDGKFAKRVVFAVHQMFGIEFAPEVVRADGTVRNLAWRICNAKRVLAPYSMTRDGATTPTEAHEKDEAFTKARVTAMIRRRTRRDSKSAGRRESQLTIHENVVLRYRAWTPFKRIEYMEGSAKPGNSSHPLPVPIPRQAIQNERRGGKKALTQVRHNKQADADNADNNDVACLSRTPQPSSLERLPSSRGKKRA</sequence>
<gene>
    <name type="primary">cho2</name>
    <name type="ORF">An15g06310</name>
</gene>
<name>CHO2_ASPNC</name>